<sequence>MNGTEGPNFYVPMSNVTGVVRSPFEYPQYYLAEPWAYSALAAYMFFLIIAGFPINFLTLYVTIEHKKLRTPLNYILLNLAVADLFMVFGGFTTTMYTSMHGYFVFGPTGCNIEGFFATLGGEIALWCLVVLAVERWMVVCKPMSNFRFGENHAIMGVAFTWVMALACAAPPLFGWSRYIPEGMQCSCGMDHYAPNPETYNESFVIYMFICHFTIPLTVISFCYGRLVCTVKEATAQQQESETTQRAEREVTRMVIIMVISFLVCWVPYASVAWYIFTHQGSSFGPIFMTIPAFFAKSSSLYNPLIYICMNKQSRNCMITTLCCGKNPFEEEEGASTTASKTEASSVSSVSPA</sequence>
<organism>
    <name type="scientific">Anguilla anguilla</name>
    <name type="common">European freshwater eel</name>
    <name type="synonym">Muraena anguilla</name>
    <dbReference type="NCBI Taxonomy" id="7936"/>
    <lineage>
        <taxon>Eukaryota</taxon>
        <taxon>Metazoa</taxon>
        <taxon>Chordata</taxon>
        <taxon>Craniata</taxon>
        <taxon>Vertebrata</taxon>
        <taxon>Euteleostomi</taxon>
        <taxon>Actinopterygii</taxon>
        <taxon>Neopterygii</taxon>
        <taxon>Teleostei</taxon>
        <taxon>Anguilliformes</taxon>
        <taxon>Anguillidae</taxon>
        <taxon>Anguilla</taxon>
    </lineage>
</organism>
<name>OPSD2_ANGAN</name>
<feature type="chain" id="PRO_0000197647" description="Rhodopsin, freshwater form">
    <location>
        <begin position="1"/>
        <end position="352"/>
    </location>
</feature>
<feature type="topological domain" description="Extracellular" evidence="2">
    <location>
        <begin position="1"/>
        <end position="36"/>
    </location>
</feature>
<feature type="transmembrane region" description="Helical; Name=1" evidence="2">
    <location>
        <begin position="37"/>
        <end position="61"/>
    </location>
</feature>
<feature type="topological domain" description="Cytoplasmic" evidence="2">
    <location>
        <begin position="62"/>
        <end position="73"/>
    </location>
</feature>
<feature type="transmembrane region" description="Helical; Name=2" evidence="2">
    <location>
        <begin position="74"/>
        <end position="98"/>
    </location>
</feature>
<feature type="topological domain" description="Extracellular" evidence="2">
    <location>
        <begin position="99"/>
        <end position="113"/>
    </location>
</feature>
<feature type="transmembrane region" description="Helical; Name=3" evidence="2">
    <location>
        <begin position="114"/>
        <end position="133"/>
    </location>
</feature>
<feature type="topological domain" description="Cytoplasmic" evidence="2">
    <location>
        <begin position="134"/>
        <end position="152"/>
    </location>
</feature>
<feature type="transmembrane region" description="Helical; Name=4" evidence="2">
    <location>
        <begin position="153"/>
        <end position="176"/>
    </location>
</feature>
<feature type="topological domain" description="Extracellular" evidence="2">
    <location>
        <begin position="177"/>
        <end position="202"/>
    </location>
</feature>
<feature type="transmembrane region" description="Helical; Name=5" evidence="2">
    <location>
        <begin position="203"/>
        <end position="230"/>
    </location>
</feature>
<feature type="topological domain" description="Cytoplasmic" evidence="2">
    <location>
        <begin position="231"/>
        <end position="252"/>
    </location>
</feature>
<feature type="transmembrane region" description="Helical; Name=6" evidence="2">
    <location>
        <begin position="253"/>
        <end position="276"/>
    </location>
</feature>
<feature type="topological domain" description="Extracellular" evidence="2">
    <location>
        <begin position="277"/>
        <end position="284"/>
    </location>
</feature>
<feature type="transmembrane region" description="Helical; Name=7" evidence="2">
    <location>
        <begin position="285"/>
        <end position="309"/>
    </location>
</feature>
<feature type="topological domain" description="Cytoplasmic" evidence="2">
    <location>
        <begin position="310"/>
        <end position="352"/>
    </location>
</feature>
<feature type="region of interest" description="Disordered" evidence="4">
    <location>
        <begin position="330"/>
        <end position="352"/>
    </location>
</feature>
<feature type="compositionally biased region" description="Low complexity" evidence="4">
    <location>
        <begin position="334"/>
        <end position="352"/>
    </location>
</feature>
<feature type="modified residue" description="N6-(retinylidene)lysine" evidence="1">
    <location>
        <position position="296"/>
    </location>
</feature>
<feature type="lipid moiety-binding region" description="S-palmitoyl cysteine" evidence="1">
    <location>
        <position position="323"/>
    </location>
</feature>
<feature type="glycosylation site" description="N-linked (GlcNAc...) asparagine" evidence="1">
    <location>
        <position position="2"/>
    </location>
</feature>
<feature type="glycosylation site" description="N-linked (GlcNAc...) asparagine" evidence="1">
    <location>
        <position position="15"/>
    </location>
</feature>
<feature type="glycosylation site" description="N-linked (GlcNAc...) asparagine" evidence="2">
    <location>
        <position position="200"/>
    </location>
</feature>
<feature type="disulfide bond" evidence="3">
    <location>
        <begin position="110"/>
        <end position="187"/>
    </location>
</feature>
<proteinExistence type="evidence at protein level"/>
<dbReference type="EMBL" id="L78007">
    <property type="protein sequence ID" value="AAA99200.1"/>
    <property type="molecule type" value="mRNA"/>
</dbReference>
<dbReference type="SMR" id="Q90215"/>
<dbReference type="GO" id="GO:0005886">
    <property type="term" value="C:plasma membrane"/>
    <property type="evidence" value="ECO:0000250"/>
    <property type="project" value="UniProtKB"/>
</dbReference>
<dbReference type="GO" id="GO:0004930">
    <property type="term" value="F:G protein-coupled receptor activity"/>
    <property type="evidence" value="ECO:0007669"/>
    <property type="project" value="UniProtKB-KW"/>
</dbReference>
<dbReference type="GO" id="GO:0009881">
    <property type="term" value="F:photoreceptor activity"/>
    <property type="evidence" value="ECO:0007669"/>
    <property type="project" value="UniProtKB-KW"/>
</dbReference>
<dbReference type="GO" id="GO:0007602">
    <property type="term" value="P:phototransduction"/>
    <property type="evidence" value="ECO:0007669"/>
    <property type="project" value="UniProtKB-KW"/>
</dbReference>
<dbReference type="GO" id="GO:0007601">
    <property type="term" value="P:visual perception"/>
    <property type="evidence" value="ECO:0007669"/>
    <property type="project" value="UniProtKB-KW"/>
</dbReference>
<dbReference type="CDD" id="cd15080">
    <property type="entry name" value="7tmA_MWS_opsin"/>
    <property type="match status" value="1"/>
</dbReference>
<dbReference type="FunFam" id="1.20.1070.10:FF:000018">
    <property type="entry name" value="Rhodopsin"/>
    <property type="match status" value="1"/>
</dbReference>
<dbReference type="Gene3D" id="1.20.1070.10">
    <property type="entry name" value="Rhodopsin 7-helix transmembrane proteins"/>
    <property type="match status" value="1"/>
</dbReference>
<dbReference type="InterPro" id="IPR050125">
    <property type="entry name" value="GPCR_opsins"/>
</dbReference>
<dbReference type="InterPro" id="IPR000276">
    <property type="entry name" value="GPCR_Rhodpsn"/>
</dbReference>
<dbReference type="InterPro" id="IPR017452">
    <property type="entry name" value="GPCR_Rhodpsn_7TM"/>
</dbReference>
<dbReference type="InterPro" id="IPR001760">
    <property type="entry name" value="Opsin"/>
</dbReference>
<dbReference type="InterPro" id="IPR027430">
    <property type="entry name" value="Retinal_BS"/>
</dbReference>
<dbReference type="InterPro" id="IPR000732">
    <property type="entry name" value="Rhodopsin"/>
</dbReference>
<dbReference type="InterPro" id="IPR019477">
    <property type="entry name" value="Rhodopsin_N"/>
</dbReference>
<dbReference type="PANTHER" id="PTHR24240">
    <property type="entry name" value="OPSIN"/>
    <property type="match status" value="1"/>
</dbReference>
<dbReference type="Pfam" id="PF00001">
    <property type="entry name" value="7tm_1"/>
    <property type="match status" value="1"/>
</dbReference>
<dbReference type="Pfam" id="PF10413">
    <property type="entry name" value="Rhodopsin_N"/>
    <property type="match status" value="1"/>
</dbReference>
<dbReference type="PRINTS" id="PR00237">
    <property type="entry name" value="GPCRRHODOPSN"/>
</dbReference>
<dbReference type="PRINTS" id="PR00238">
    <property type="entry name" value="OPSIN"/>
</dbReference>
<dbReference type="PRINTS" id="PR00579">
    <property type="entry name" value="RHODOPSIN"/>
</dbReference>
<dbReference type="SUPFAM" id="SSF81321">
    <property type="entry name" value="Family A G protein-coupled receptor-like"/>
    <property type="match status" value="1"/>
</dbReference>
<dbReference type="PROSITE" id="PS00237">
    <property type="entry name" value="G_PROTEIN_RECEP_F1_1"/>
    <property type="match status" value="1"/>
</dbReference>
<dbReference type="PROSITE" id="PS50262">
    <property type="entry name" value="G_PROTEIN_RECEP_F1_2"/>
    <property type="match status" value="1"/>
</dbReference>
<dbReference type="PROSITE" id="PS00238">
    <property type="entry name" value="OPSIN"/>
    <property type="match status" value="1"/>
</dbReference>
<accession>Q90215</accession>
<protein>
    <recommendedName>
        <fullName>Rhodopsin, freshwater form</fullName>
    </recommendedName>
</protein>
<reference key="1">
    <citation type="journal article" date="1995" name="Proc. R. Soc. B">
        <title>The molecular basis for the green-blue sensitivity shift in the rod visual pigments of the European eel.</title>
        <authorList>
            <person name="Archer S.N."/>
            <person name="Hope A."/>
            <person name="Partridge J.C."/>
        </authorList>
    </citation>
    <scope>NUCLEOTIDE SEQUENCE [MRNA]</scope>
    <source>
        <tissue>Retina</tissue>
    </source>
</reference>
<comment type="function">
    <text>Visual pigments such as rhodopsin and porphyropsin are light-absorbing molecules that mediate vision. Rhodopsin consists of an apoprotein, opsin, covalently linked to 11-cis-retinal. This receptor is coupled to the activation of phospholipase C. Porphyropsin consists of opsin covalently linked to 11-cis 3,4-didehydroretinal.</text>
</comment>
<comment type="biophysicochemical properties">
    <absorption>
        <max>~512 nm</max>
    </absorption>
</comment>
<comment type="subcellular location">
    <subcellularLocation>
        <location>Membrane</location>
        <topology>Multi-pass membrane protein</topology>
    </subcellularLocation>
</comment>
<comment type="tissue specificity">
    <text>Rod shaped photoreceptor cells which mediates vision in dim light.</text>
</comment>
<comment type="developmental stage">
    <text>When eel matures sexually and migrates back to deep sea breeding grounds the visual pigments in its rod photoreceptors change from being maximally sensitive to green light to being maximally sensitive to blue light. In part, this change in sensitivity is due to a change in the opsin component of the visual pigment molecule; this green sensitive rhodopsin is expressed during life in greener inland and coastal waters.</text>
</comment>
<comment type="PTM">
    <text>Phosphorylated on some or all of the serine and threonine residues present in the C-terminal region.</text>
</comment>
<comment type="similarity">
    <text evidence="3">Belongs to the G-protein coupled receptor 1 family. Opsin subfamily.</text>
</comment>
<keyword id="KW-0157">Chromophore</keyword>
<keyword id="KW-1015">Disulfide bond</keyword>
<keyword id="KW-0297">G-protein coupled receptor</keyword>
<keyword id="KW-0325">Glycoprotein</keyword>
<keyword id="KW-0449">Lipoprotein</keyword>
<keyword id="KW-0472">Membrane</keyword>
<keyword id="KW-0564">Palmitate</keyword>
<keyword id="KW-0597">Phosphoprotein</keyword>
<keyword id="KW-0600">Photoreceptor protein</keyword>
<keyword id="KW-0675">Receptor</keyword>
<keyword id="KW-0681">Retinal protein</keyword>
<keyword id="KW-0716">Sensory transduction</keyword>
<keyword id="KW-0807">Transducer</keyword>
<keyword id="KW-0812">Transmembrane</keyword>
<keyword id="KW-1133">Transmembrane helix</keyword>
<keyword id="KW-0844">Vision</keyword>
<evidence type="ECO:0000250" key="1"/>
<evidence type="ECO:0000255" key="2"/>
<evidence type="ECO:0000255" key="3">
    <source>
        <dbReference type="PROSITE-ProRule" id="PRU00521"/>
    </source>
</evidence>
<evidence type="ECO:0000256" key="4">
    <source>
        <dbReference type="SAM" id="MobiDB-lite"/>
    </source>
</evidence>